<comment type="function">
    <text evidence="1">May be involved in the regulation of cell differentiation.</text>
</comment>
<comment type="subcellular location">
    <subcellularLocation>
        <location evidence="3">Membrane</location>
        <topology evidence="3">Multi-pass membrane protein</topology>
    </subcellularLocation>
</comment>
<comment type="similarity">
    <text evidence="3">Belongs to the tetraspanin (TM4SF) family.</text>
</comment>
<feature type="chain" id="PRO_0000421042" description="Tetraspanin-2">
    <location>
        <begin position="1"/>
        <end position="270"/>
    </location>
</feature>
<feature type="topological domain" description="Cytoplasmic" evidence="2">
    <location>
        <begin position="1"/>
        <end position="8"/>
    </location>
</feature>
<feature type="transmembrane region" description="Helical" evidence="2">
    <location>
        <begin position="9"/>
        <end position="29"/>
    </location>
</feature>
<feature type="topological domain" description="Extracellular" evidence="2">
    <location>
        <begin position="30"/>
        <end position="42"/>
    </location>
</feature>
<feature type="transmembrane region" description="Helical" evidence="2">
    <location>
        <begin position="43"/>
        <end position="63"/>
    </location>
</feature>
<feature type="topological domain" description="Cytoplasmic" evidence="2">
    <location>
        <begin position="64"/>
        <end position="74"/>
    </location>
</feature>
<feature type="transmembrane region" description="Helical" evidence="2">
    <location>
        <begin position="75"/>
        <end position="95"/>
    </location>
</feature>
<feature type="topological domain" description="Extracellular" evidence="2">
    <location>
        <begin position="96"/>
        <end position="232"/>
    </location>
</feature>
<feature type="transmembrane region" description="Helical" evidence="2">
    <location>
        <begin position="233"/>
        <end position="253"/>
    </location>
</feature>
<feature type="topological domain" description="Cytoplasmic" evidence="2">
    <location>
        <begin position="254"/>
        <end position="270"/>
    </location>
</feature>
<reference key="1">
    <citation type="journal article" date="1999" name="Nature">
        <title>Sequence and analysis of chromosome 2 of the plant Arabidopsis thaliana.</title>
        <authorList>
            <person name="Lin X."/>
            <person name="Kaul S."/>
            <person name="Rounsley S.D."/>
            <person name="Shea T.P."/>
            <person name="Benito M.-I."/>
            <person name="Town C.D."/>
            <person name="Fujii C.Y."/>
            <person name="Mason T.M."/>
            <person name="Bowman C.L."/>
            <person name="Barnstead M.E."/>
            <person name="Feldblyum T.V."/>
            <person name="Buell C.R."/>
            <person name="Ketchum K.A."/>
            <person name="Lee J.J."/>
            <person name="Ronning C.M."/>
            <person name="Koo H.L."/>
            <person name="Moffat K.S."/>
            <person name="Cronin L.A."/>
            <person name="Shen M."/>
            <person name="Pai G."/>
            <person name="Van Aken S."/>
            <person name="Umayam L."/>
            <person name="Tallon L.J."/>
            <person name="Gill J.E."/>
            <person name="Adams M.D."/>
            <person name="Carrera A.J."/>
            <person name="Creasy T.H."/>
            <person name="Goodman H.M."/>
            <person name="Somerville C.R."/>
            <person name="Copenhaver G.P."/>
            <person name="Preuss D."/>
            <person name="Nierman W.C."/>
            <person name="White O."/>
            <person name="Eisen J.A."/>
            <person name="Salzberg S.L."/>
            <person name="Fraser C.M."/>
            <person name="Venter J.C."/>
        </authorList>
    </citation>
    <scope>NUCLEOTIDE SEQUENCE [LARGE SCALE GENOMIC DNA]</scope>
    <source>
        <strain>cv. Columbia</strain>
    </source>
</reference>
<reference key="2">
    <citation type="journal article" date="2017" name="Plant J.">
        <title>Araport11: a complete reannotation of the Arabidopsis thaliana reference genome.</title>
        <authorList>
            <person name="Cheng C.Y."/>
            <person name="Krishnakumar V."/>
            <person name="Chan A.P."/>
            <person name="Thibaud-Nissen F."/>
            <person name="Schobel S."/>
            <person name="Town C.D."/>
        </authorList>
    </citation>
    <scope>GENOME REANNOTATION</scope>
    <source>
        <strain>cv. Columbia</strain>
    </source>
</reference>
<reference key="3">
    <citation type="submission" date="2004-04" db="EMBL/GenBank/DDBJ databases">
        <title>Arabidopsis ORF clones.</title>
        <authorList>
            <person name="Kim C.J."/>
            <person name="Chen H."/>
            <person name="Cheuk R.F."/>
            <person name="Shinn P."/>
            <person name="Ecker J.R."/>
        </authorList>
    </citation>
    <scope>NUCLEOTIDE SEQUENCE [LARGE SCALE MRNA]</scope>
    <source>
        <strain>cv. Columbia</strain>
    </source>
</reference>
<reference key="4">
    <citation type="submission" date="2006-07" db="EMBL/GenBank/DDBJ databases">
        <title>Large-scale analysis of RIKEN Arabidopsis full-length (RAFL) cDNAs.</title>
        <authorList>
            <person name="Totoki Y."/>
            <person name="Seki M."/>
            <person name="Ishida J."/>
            <person name="Nakajima M."/>
            <person name="Enju A."/>
            <person name="Kamiya A."/>
            <person name="Narusaka M."/>
            <person name="Shin-i T."/>
            <person name="Nakagawa M."/>
            <person name="Sakamoto N."/>
            <person name="Oishi K."/>
            <person name="Kohara Y."/>
            <person name="Kobayashi M."/>
            <person name="Toyoda A."/>
            <person name="Sakaki Y."/>
            <person name="Sakurai T."/>
            <person name="Iida K."/>
            <person name="Akiyama K."/>
            <person name="Satou M."/>
            <person name="Toyoda T."/>
            <person name="Konagaya A."/>
            <person name="Carninci P."/>
            <person name="Kawai J."/>
            <person name="Hayashizaki Y."/>
            <person name="Shinozaki K."/>
        </authorList>
    </citation>
    <scope>NUCLEOTIDE SEQUENCE [LARGE SCALE MRNA]</scope>
    <source>
        <strain>cv. Columbia</strain>
    </source>
</reference>
<evidence type="ECO:0000250" key="1"/>
<evidence type="ECO:0000255" key="2"/>
<evidence type="ECO:0000305" key="3"/>
<protein>
    <recommendedName>
        <fullName>Tetraspanin-2</fullName>
    </recommendedName>
</protein>
<keyword id="KW-0472">Membrane</keyword>
<keyword id="KW-1185">Reference proteome</keyword>
<keyword id="KW-0812">Transmembrane</keyword>
<keyword id="KW-1133">Transmembrane helix</keyword>
<dbReference type="EMBL" id="AC005917">
    <property type="protein sequence ID" value="AAD10165.1"/>
    <property type="molecule type" value="Genomic_DNA"/>
</dbReference>
<dbReference type="EMBL" id="CP002685">
    <property type="protein sequence ID" value="AEC06897.1"/>
    <property type="molecule type" value="Genomic_DNA"/>
</dbReference>
<dbReference type="EMBL" id="BT011213">
    <property type="protein sequence ID" value="AAR92249.1"/>
    <property type="molecule type" value="mRNA"/>
</dbReference>
<dbReference type="EMBL" id="BT012532">
    <property type="protein sequence ID" value="AAS99676.1"/>
    <property type="molecule type" value="mRNA"/>
</dbReference>
<dbReference type="EMBL" id="AK229021">
    <property type="protein sequence ID" value="BAF00907.1"/>
    <property type="molecule type" value="mRNA"/>
</dbReference>
<dbReference type="PIR" id="E84578">
    <property type="entry name" value="E84578"/>
</dbReference>
<dbReference type="RefSeq" id="NP_179548.1">
    <property type="nucleotide sequence ID" value="NM_127516.4"/>
</dbReference>
<dbReference type="BioGRID" id="1832">
    <property type="interactions" value="32"/>
</dbReference>
<dbReference type="FunCoup" id="Q9ZUN5">
    <property type="interactions" value="325"/>
</dbReference>
<dbReference type="IntAct" id="Q9ZUN5">
    <property type="interactions" value="32"/>
</dbReference>
<dbReference type="STRING" id="3702.Q9ZUN5"/>
<dbReference type="iPTMnet" id="Q9ZUN5"/>
<dbReference type="PaxDb" id="3702-AT2G19580.1"/>
<dbReference type="ProteomicsDB" id="226626"/>
<dbReference type="EnsemblPlants" id="AT2G19580.1">
    <property type="protein sequence ID" value="AT2G19580.1"/>
    <property type="gene ID" value="AT2G19580"/>
</dbReference>
<dbReference type="GeneID" id="816477"/>
<dbReference type="Gramene" id="AT2G19580.1">
    <property type="protein sequence ID" value="AT2G19580.1"/>
    <property type="gene ID" value="AT2G19580"/>
</dbReference>
<dbReference type="KEGG" id="ath:AT2G19580"/>
<dbReference type="Araport" id="AT2G19580"/>
<dbReference type="TAIR" id="AT2G19580">
    <property type="gene designation" value="TET2"/>
</dbReference>
<dbReference type="eggNOG" id="ENOG502QUE2">
    <property type="taxonomic scope" value="Eukaryota"/>
</dbReference>
<dbReference type="HOGENOM" id="CLU_066970_0_0_1"/>
<dbReference type="InParanoid" id="Q9ZUN5"/>
<dbReference type="OMA" id="DNECIHN"/>
<dbReference type="PhylomeDB" id="Q9ZUN5"/>
<dbReference type="PRO" id="PR:Q9ZUN5"/>
<dbReference type="Proteomes" id="UP000006548">
    <property type="component" value="Chromosome 2"/>
</dbReference>
<dbReference type="ExpressionAtlas" id="Q9ZUN5">
    <property type="expression patterns" value="baseline and differential"/>
</dbReference>
<dbReference type="GO" id="GO:0016020">
    <property type="term" value="C:membrane"/>
    <property type="evidence" value="ECO:0007669"/>
    <property type="project" value="UniProtKB-SubCell"/>
</dbReference>
<dbReference type="GO" id="GO:0009734">
    <property type="term" value="P:auxin-activated signaling pathway"/>
    <property type="evidence" value="ECO:0007669"/>
    <property type="project" value="InterPro"/>
</dbReference>
<dbReference type="InterPro" id="IPR044991">
    <property type="entry name" value="TET_plant"/>
</dbReference>
<dbReference type="InterPro" id="IPR018499">
    <property type="entry name" value="Tetraspanin/Peripherin"/>
</dbReference>
<dbReference type="PANTHER" id="PTHR32191">
    <property type="entry name" value="TETRASPANIN-8-RELATED"/>
    <property type="match status" value="1"/>
</dbReference>
<dbReference type="Pfam" id="PF00335">
    <property type="entry name" value="Tetraspanin"/>
    <property type="match status" value="1"/>
</dbReference>
<dbReference type="PRINTS" id="PR00259">
    <property type="entry name" value="TMFOUR"/>
</dbReference>
<sequence>MALANNLTAILNLLALLCSIPITASGIWLASKPDNECVNLLRWPVVVLGVLILVVSATGFIGAYKYKETLLAVYLCCMAILIGLLLVVLIFAFVVTRPDGSYRVPGRGYKEYRLEGFSNWLKENVVDSKNWGRLRACLADTNVCPKLNQEFITADQFFSSSKITPLQSGCCKPPTACGYNFVNPTLWLNPTNMAADADCYLWSNDQSQLCYNCNSCKAGLLGNLRKEWRKANLILIITVVVLIWVYVIACSAFRNAQTEDLFRKYKQGWV</sequence>
<name>TET2_ARATH</name>
<gene>
    <name type="primary">TET2</name>
    <name type="ordered locus">At2g19580</name>
    <name type="ORF">F3P11.18</name>
</gene>
<accession>Q9ZUN5</accession>
<organism>
    <name type="scientific">Arabidopsis thaliana</name>
    <name type="common">Mouse-ear cress</name>
    <dbReference type="NCBI Taxonomy" id="3702"/>
    <lineage>
        <taxon>Eukaryota</taxon>
        <taxon>Viridiplantae</taxon>
        <taxon>Streptophyta</taxon>
        <taxon>Embryophyta</taxon>
        <taxon>Tracheophyta</taxon>
        <taxon>Spermatophyta</taxon>
        <taxon>Magnoliopsida</taxon>
        <taxon>eudicotyledons</taxon>
        <taxon>Gunneridae</taxon>
        <taxon>Pentapetalae</taxon>
        <taxon>rosids</taxon>
        <taxon>malvids</taxon>
        <taxon>Brassicales</taxon>
        <taxon>Brassicaceae</taxon>
        <taxon>Camelineae</taxon>
        <taxon>Arabidopsis</taxon>
    </lineage>
</organism>
<proteinExistence type="evidence at transcript level"/>